<accession>P15619</accession>
<accession>Q9VAT4</accession>
<proteinExistence type="evidence at protein level"/>
<gene>
    <name type="primary">wdn</name>
    <name type="synonym">pqp</name>
    <name type="synonym">sry h-1</name>
    <name type="synonym">Sry-c</name>
    <name type="ORF">CG1454</name>
</gene>
<dbReference type="EMBL" id="M23391">
    <property type="protein sequence ID" value="AAA28487.1"/>
    <property type="molecule type" value="Genomic_DNA"/>
</dbReference>
<dbReference type="EMBL" id="AE014297">
    <property type="protein sequence ID" value="AAF56815.1"/>
    <property type="molecule type" value="Genomic_DNA"/>
</dbReference>
<dbReference type="EMBL" id="AY058690">
    <property type="protein sequence ID" value="AAL13919.1"/>
    <property type="molecule type" value="mRNA"/>
</dbReference>
<dbReference type="PIR" id="A30817">
    <property type="entry name" value="A30817"/>
</dbReference>
<dbReference type="RefSeq" id="NP_476900.1">
    <property type="nucleotide sequence ID" value="NM_057552.4"/>
</dbReference>
<dbReference type="SMR" id="P15619"/>
<dbReference type="BioGRID" id="68274">
    <property type="interactions" value="16"/>
</dbReference>
<dbReference type="FunCoup" id="P15619">
    <property type="interactions" value="689"/>
</dbReference>
<dbReference type="IntAct" id="P15619">
    <property type="interactions" value="13"/>
</dbReference>
<dbReference type="STRING" id="7227.FBpp0084725"/>
<dbReference type="PaxDb" id="7227-FBpp0084725"/>
<dbReference type="EnsemblMetazoa" id="FBtr0085356">
    <property type="protein sequence ID" value="FBpp0084725"/>
    <property type="gene ID" value="FBgn0005642"/>
</dbReference>
<dbReference type="GeneID" id="43398"/>
<dbReference type="KEGG" id="dme:Dmel_CG1454"/>
<dbReference type="AGR" id="FB:FBgn0005642"/>
<dbReference type="CTD" id="43398"/>
<dbReference type="FlyBase" id="FBgn0005642">
    <property type="gene designation" value="wdn"/>
</dbReference>
<dbReference type="VEuPathDB" id="VectorBase:FBgn0005642"/>
<dbReference type="eggNOG" id="KOG1721">
    <property type="taxonomic scope" value="Eukaryota"/>
</dbReference>
<dbReference type="GeneTree" id="ENSGT00940000168270"/>
<dbReference type="HOGENOM" id="CLU_014494_0_0_1"/>
<dbReference type="InParanoid" id="P15619"/>
<dbReference type="OMA" id="AFTIFQQ"/>
<dbReference type="OrthoDB" id="3437960at2759"/>
<dbReference type="PhylomeDB" id="P15619"/>
<dbReference type="Reactome" id="R-DME-212436">
    <property type="pathway name" value="Generic Transcription Pathway"/>
</dbReference>
<dbReference type="BioGRID-ORCS" id="43398">
    <property type="hits" value="0 hits in 1 CRISPR screen"/>
</dbReference>
<dbReference type="GenomeRNAi" id="43398"/>
<dbReference type="PRO" id="PR:P15619"/>
<dbReference type="Proteomes" id="UP000000803">
    <property type="component" value="Chromosome 3R"/>
</dbReference>
<dbReference type="Bgee" id="FBgn0005642">
    <property type="expression patterns" value="Expressed in egg cell and 105 other cell types or tissues"/>
</dbReference>
<dbReference type="GO" id="GO:0005634">
    <property type="term" value="C:nucleus"/>
    <property type="evidence" value="ECO:0000314"/>
    <property type="project" value="UniProtKB"/>
</dbReference>
<dbReference type="GO" id="GO:0003677">
    <property type="term" value="F:DNA binding"/>
    <property type="evidence" value="ECO:0000314"/>
    <property type="project" value="UniProtKB"/>
</dbReference>
<dbReference type="GO" id="GO:0003700">
    <property type="term" value="F:DNA-binding transcription factor activity"/>
    <property type="evidence" value="ECO:0000318"/>
    <property type="project" value="GO_Central"/>
</dbReference>
<dbReference type="GO" id="GO:0000978">
    <property type="term" value="F:RNA polymerase II cis-regulatory region sequence-specific DNA binding"/>
    <property type="evidence" value="ECO:0000318"/>
    <property type="project" value="GO_Central"/>
</dbReference>
<dbReference type="GO" id="GO:0008270">
    <property type="term" value="F:zinc ion binding"/>
    <property type="evidence" value="ECO:0007669"/>
    <property type="project" value="UniProtKB-KW"/>
</dbReference>
<dbReference type="GO" id="GO:0006357">
    <property type="term" value="P:regulation of transcription by RNA polymerase II"/>
    <property type="evidence" value="ECO:0000318"/>
    <property type="project" value="GO_Central"/>
</dbReference>
<dbReference type="FunFam" id="3.30.160.60:FF:004084">
    <property type="match status" value="1"/>
</dbReference>
<dbReference type="FunFam" id="3.30.160.60:FF:002417">
    <property type="entry name" value="Serendipity locus protein H-1"/>
    <property type="match status" value="1"/>
</dbReference>
<dbReference type="FunFam" id="3.30.160.60:FF:000099">
    <property type="entry name" value="Zinc finger protein 79"/>
    <property type="match status" value="1"/>
</dbReference>
<dbReference type="FunFam" id="3.30.160.60:FF:000110">
    <property type="entry name" value="Zinc finger protein-like"/>
    <property type="match status" value="1"/>
</dbReference>
<dbReference type="Gene3D" id="3.30.160.60">
    <property type="entry name" value="Classic Zinc Finger"/>
    <property type="match status" value="5"/>
</dbReference>
<dbReference type="InterPro" id="IPR050331">
    <property type="entry name" value="Zinc_finger"/>
</dbReference>
<dbReference type="InterPro" id="IPR036236">
    <property type="entry name" value="Znf_C2H2_sf"/>
</dbReference>
<dbReference type="InterPro" id="IPR013087">
    <property type="entry name" value="Znf_C2H2_type"/>
</dbReference>
<dbReference type="PANTHER" id="PTHR16515:SF49">
    <property type="entry name" value="GASTRULA ZINC FINGER PROTEIN XLCGF49.1-LIKE-RELATED"/>
    <property type="match status" value="1"/>
</dbReference>
<dbReference type="PANTHER" id="PTHR16515">
    <property type="entry name" value="PR DOMAIN ZINC FINGER PROTEIN"/>
    <property type="match status" value="1"/>
</dbReference>
<dbReference type="Pfam" id="PF00096">
    <property type="entry name" value="zf-C2H2"/>
    <property type="match status" value="6"/>
</dbReference>
<dbReference type="SMART" id="SM00355">
    <property type="entry name" value="ZnF_C2H2"/>
    <property type="match status" value="8"/>
</dbReference>
<dbReference type="SUPFAM" id="SSF57667">
    <property type="entry name" value="beta-beta-alpha zinc fingers"/>
    <property type="match status" value="4"/>
</dbReference>
<dbReference type="PROSITE" id="PS00028">
    <property type="entry name" value="ZINC_FINGER_C2H2_1"/>
    <property type="match status" value="6"/>
</dbReference>
<dbReference type="PROSITE" id="PS50157">
    <property type="entry name" value="ZINC_FINGER_C2H2_2"/>
    <property type="match status" value="6"/>
</dbReference>
<organism>
    <name type="scientific">Drosophila melanogaster</name>
    <name type="common">Fruit fly</name>
    <dbReference type="NCBI Taxonomy" id="7227"/>
    <lineage>
        <taxon>Eukaryota</taxon>
        <taxon>Metazoa</taxon>
        <taxon>Ecdysozoa</taxon>
        <taxon>Arthropoda</taxon>
        <taxon>Hexapoda</taxon>
        <taxon>Insecta</taxon>
        <taxon>Pterygota</taxon>
        <taxon>Neoptera</taxon>
        <taxon>Endopterygota</taxon>
        <taxon>Diptera</taxon>
        <taxon>Brachycera</taxon>
        <taxon>Muscomorpha</taxon>
        <taxon>Ephydroidea</taxon>
        <taxon>Drosophilidae</taxon>
        <taxon>Drosophila</taxon>
        <taxon>Sophophora</taxon>
    </lineage>
</organism>
<keyword id="KW-0217">Developmental protein</keyword>
<keyword id="KW-0238">DNA-binding</keyword>
<keyword id="KW-0479">Metal-binding</keyword>
<keyword id="KW-0539">Nucleus</keyword>
<keyword id="KW-1185">Reference proteome</keyword>
<keyword id="KW-0677">Repeat</keyword>
<keyword id="KW-0804">Transcription</keyword>
<keyword id="KW-0805">Transcription regulation</keyword>
<keyword id="KW-0862">Zinc</keyword>
<keyword id="KW-0863">Zinc-finger</keyword>
<protein>
    <recommendedName>
        <fullName>Serendipity locus protein H-1</fullName>
    </recommendedName>
    <alternativeName>
        <fullName>Protein pourquoi-pas</fullName>
    </alternativeName>
    <alternativeName>
        <fullName>Protein wings-down</fullName>
    </alternativeName>
</protein>
<feature type="chain" id="PRO_0000047051" description="Serendipity locus protein H-1">
    <location>
        <begin position="1"/>
        <end position="869"/>
    </location>
</feature>
<feature type="zinc finger region" description="C2H2-type 1" evidence="1">
    <location>
        <begin position="269"/>
        <end position="293"/>
    </location>
</feature>
<feature type="zinc finger region" description="C2H2-type 2" evidence="1">
    <location>
        <begin position="299"/>
        <end position="321"/>
    </location>
</feature>
<feature type="zinc finger region" description="C2H2-type 3" evidence="1">
    <location>
        <begin position="331"/>
        <end position="352"/>
    </location>
</feature>
<feature type="zinc finger region" description="C2H2-type 4" evidence="1">
    <location>
        <begin position="358"/>
        <end position="380"/>
    </location>
</feature>
<feature type="zinc finger region" description="C2H2-type 5" evidence="1">
    <location>
        <begin position="386"/>
        <end position="408"/>
    </location>
</feature>
<feature type="zinc finger region" description="C2H2-type 6" evidence="1">
    <location>
        <begin position="414"/>
        <end position="436"/>
    </location>
</feature>
<feature type="zinc finger region" description="C2H2-type 7" evidence="1">
    <location>
        <begin position="442"/>
        <end position="464"/>
    </location>
</feature>
<feature type="zinc finger region" description="C2H2-type 8" evidence="1">
    <location>
        <begin position="470"/>
        <end position="493"/>
    </location>
</feature>
<feature type="region of interest" description="Disordered" evidence="2">
    <location>
        <begin position="1"/>
        <end position="32"/>
    </location>
</feature>
<feature type="region of interest" description="Disordered" evidence="2">
    <location>
        <begin position="134"/>
        <end position="165"/>
    </location>
</feature>
<feature type="region of interest" description="Disordered" evidence="2">
    <location>
        <begin position="554"/>
        <end position="573"/>
    </location>
</feature>
<feature type="region of interest" description="Disordered" evidence="2">
    <location>
        <begin position="617"/>
        <end position="652"/>
    </location>
</feature>
<feature type="compositionally biased region" description="Basic and acidic residues" evidence="2">
    <location>
        <begin position="1"/>
        <end position="17"/>
    </location>
</feature>
<feature type="compositionally biased region" description="Polar residues" evidence="2">
    <location>
        <begin position="146"/>
        <end position="164"/>
    </location>
</feature>
<feature type="compositionally biased region" description="Low complexity" evidence="2">
    <location>
        <begin position="630"/>
        <end position="648"/>
    </location>
</feature>
<feature type="sequence conflict" description="In Ref. 1; AAA28487." evidence="5" ref="1">
    <original>V</original>
    <variation>L</variation>
    <location>
        <position position="120"/>
    </location>
</feature>
<feature type="sequence conflict" description="In Ref. 1; AAA28487." evidence="5" ref="1">
    <original>AASMPP</original>
    <variation>RLACR</variation>
    <location>
        <begin position="247"/>
        <end position="252"/>
    </location>
</feature>
<feature type="sequence conflict" description="In Ref. 1; AAA28487." evidence="5" ref="1">
    <original>T</original>
    <variation>N</variation>
    <location>
        <position position="706"/>
    </location>
</feature>
<feature type="sequence conflict" description="In Ref. 1; AAA28487." evidence="5" ref="1">
    <original>P</original>
    <variation>A</variation>
    <location>
        <position position="750"/>
    </location>
</feature>
<sequence length="869" mass="95314">MEGGKGEGKRMKEEAPSKKLPPKIYGGDAGTPTKAAHDEILSSLLRINNFDSISSIKDESLDIDLSACVTISSASLVNGNSLSSTDFWRVLDESAQNNTELNLSSDVCRDDLAATSSSTVPSTLTSDNHSSSEFSVTFLRPEPPNAFTNSPFKKTSSSGTSTPVKLSPEQLHQQHQLQMPQSQLLQRKPKLPAATAVRLKVFKEEPPEEKHPPEQVVTKVEVCESELLPPSFTIFQQAKSAESVADAASMPPPAASETKPLEVDPAPLHKCLDCNGLLLETPDEVAKHEAAAHRLRLTYRCSECQREFELLAGLKKHLKTHRTEGRKDTWKKCPDCGKCLKLGSMWMHRKIHSDNKKYQCDICGQKFVQKINLTHHARIHSSEKPYECPECQKRFQERSHLQRHQKYHAQTRSYRCEKCGKMYKTERCLKVHNLVHLEQRPFACTVCDKSFISNSKLKQHSNIHTGMRPFKCNYCPRDFTNFPNWLKHTRRRHKVDHKTGEHLENIPSYCSKKSTTNKAQKAAAAAAAAAAASSAVNPNELSASSELKAKANLTSTAAPAPAKQARKKKQPQQATLAALGITLPAGTALQQVHPVPLAQQHQQELTTVLVPLAPPAPKQTKAKRERKQLAPKQLQQKPQLLQQGQPQQSSLEPIPAVPQIKKEPVQTQGPFLDLHGLSLTSAEELIMEQALEMEECGLYDAPNANTEMGTSDNAISDSAAALHFQIKNELPDELLPDDDFLPCKPSDRLPCPSLESSPFSSPASMELTAVSCASSVAISTNALPVRSGNYYLPAFTLNAHGKLSSTGNGVQSVTTSLAQTPSVSMVNVPLLVRSNQMLPSVDTLLFTNQTGGSRFFAGKSATAATPHLT</sequence>
<reference key="1">
    <citation type="journal article" date="1988" name="Mol. Cell. Biol.">
        <title>sry h-1, a new Drosophila melanogaster multifingered protein gene showing maternal and zygotic expression.</title>
        <authorList>
            <person name="Vincent A."/>
            <person name="Kejzlarova-Lepesant J."/>
            <person name="Segalat L."/>
            <person name="Yanicostas C."/>
            <person name="Lepesant J.-A."/>
        </authorList>
    </citation>
    <scope>NUCLEOTIDE SEQUENCE [GENOMIC DNA]</scope>
    <scope>FUNCTION</scope>
    <scope>DEVELOPMENTAL STAGE</scope>
    <source>
        <strain>Canton-S</strain>
    </source>
</reference>
<reference key="2">
    <citation type="journal article" date="2000" name="Science">
        <title>The genome sequence of Drosophila melanogaster.</title>
        <authorList>
            <person name="Adams M.D."/>
            <person name="Celniker S.E."/>
            <person name="Holt R.A."/>
            <person name="Evans C.A."/>
            <person name="Gocayne J.D."/>
            <person name="Amanatides P.G."/>
            <person name="Scherer S.E."/>
            <person name="Li P.W."/>
            <person name="Hoskins R.A."/>
            <person name="Galle R.F."/>
            <person name="George R.A."/>
            <person name="Lewis S.E."/>
            <person name="Richards S."/>
            <person name="Ashburner M."/>
            <person name="Henderson S.N."/>
            <person name="Sutton G.G."/>
            <person name="Wortman J.R."/>
            <person name="Yandell M.D."/>
            <person name="Zhang Q."/>
            <person name="Chen L.X."/>
            <person name="Brandon R.C."/>
            <person name="Rogers Y.-H.C."/>
            <person name="Blazej R.G."/>
            <person name="Champe M."/>
            <person name="Pfeiffer B.D."/>
            <person name="Wan K.H."/>
            <person name="Doyle C."/>
            <person name="Baxter E.G."/>
            <person name="Helt G."/>
            <person name="Nelson C.R."/>
            <person name="Miklos G.L.G."/>
            <person name="Abril J.F."/>
            <person name="Agbayani A."/>
            <person name="An H.-J."/>
            <person name="Andrews-Pfannkoch C."/>
            <person name="Baldwin D."/>
            <person name="Ballew R.M."/>
            <person name="Basu A."/>
            <person name="Baxendale J."/>
            <person name="Bayraktaroglu L."/>
            <person name="Beasley E.M."/>
            <person name="Beeson K.Y."/>
            <person name="Benos P.V."/>
            <person name="Berman B.P."/>
            <person name="Bhandari D."/>
            <person name="Bolshakov S."/>
            <person name="Borkova D."/>
            <person name="Botchan M.R."/>
            <person name="Bouck J."/>
            <person name="Brokstein P."/>
            <person name="Brottier P."/>
            <person name="Burtis K.C."/>
            <person name="Busam D.A."/>
            <person name="Butler H."/>
            <person name="Cadieu E."/>
            <person name="Center A."/>
            <person name="Chandra I."/>
            <person name="Cherry J.M."/>
            <person name="Cawley S."/>
            <person name="Dahlke C."/>
            <person name="Davenport L.B."/>
            <person name="Davies P."/>
            <person name="de Pablos B."/>
            <person name="Delcher A."/>
            <person name="Deng Z."/>
            <person name="Mays A.D."/>
            <person name="Dew I."/>
            <person name="Dietz S.M."/>
            <person name="Dodson K."/>
            <person name="Doup L.E."/>
            <person name="Downes M."/>
            <person name="Dugan-Rocha S."/>
            <person name="Dunkov B.C."/>
            <person name="Dunn P."/>
            <person name="Durbin K.J."/>
            <person name="Evangelista C.C."/>
            <person name="Ferraz C."/>
            <person name="Ferriera S."/>
            <person name="Fleischmann W."/>
            <person name="Fosler C."/>
            <person name="Gabrielian A.E."/>
            <person name="Garg N.S."/>
            <person name="Gelbart W.M."/>
            <person name="Glasser K."/>
            <person name="Glodek A."/>
            <person name="Gong F."/>
            <person name="Gorrell J.H."/>
            <person name="Gu Z."/>
            <person name="Guan P."/>
            <person name="Harris M."/>
            <person name="Harris N.L."/>
            <person name="Harvey D.A."/>
            <person name="Heiman T.J."/>
            <person name="Hernandez J.R."/>
            <person name="Houck J."/>
            <person name="Hostin D."/>
            <person name="Houston K.A."/>
            <person name="Howland T.J."/>
            <person name="Wei M.-H."/>
            <person name="Ibegwam C."/>
            <person name="Jalali M."/>
            <person name="Kalush F."/>
            <person name="Karpen G.H."/>
            <person name="Ke Z."/>
            <person name="Kennison J.A."/>
            <person name="Ketchum K.A."/>
            <person name="Kimmel B.E."/>
            <person name="Kodira C.D."/>
            <person name="Kraft C.L."/>
            <person name="Kravitz S."/>
            <person name="Kulp D."/>
            <person name="Lai Z."/>
            <person name="Lasko P."/>
            <person name="Lei Y."/>
            <person name="Levitsky A.A."/>
            <person name="Li J.H."/>
            <person name="Li Z."/>
            <person name="Liang Y."/>
            <person name="Lin X."/>
            <person name="Liu X."/>
            <person name="Mattei B."/>
            <person name="McIntosh T.C."/>
            <person name="McLeod M.P."/>
            <person name="McPherson D."/>
            <person name="Merkulov G."/>
            <person name="Milshina N.V."/>
            <person name="Mobarry C."/>
            <person name="Morris J."/>
            <person name="Moshrefi A."/>
            <person name="Mount S.M."/>
            <person name="Moy M."/>
            <person name="Murphy B."/>
            <person name="Murphy L."/>
            <person name="Muzny D.M."/>
            <person name="Nelson D.L."/>
            <person name="Nelson D.R."/>
            <person name="Nelson K.A."/>
            <person name="Nixon K."/>
            <person name="Nusskern D.R."/>
            <person name="Pacleb J.M."/>
            <person name="Palazzolo M."/>
            <person name="Pittman G.S."/>
            <person name="Pan S."/>
            <person name="Pollard J."/>
            <person name="Puri V."/>
            <person name="Reese M.G."/>
            <person name="Reinert K."/>
            <person name="Remington K."/>
            <person name="Saunders R.D.C."/>
            <person name="Scheeler F."/>
            <person name="Shen H."/>
            <person name="Shue B.C."/>
            <person name="Siden-Kiamos I."/>
            <person name="Simpson M."/>
            <person name="Skupski M.P."/>
            <person name="Smith T.J."/>
            <person name="Spier E."/>
            <person name="Spradling A.C."/>
            <person name="Stapleton M."/>
            <person name="Strong R."/>
            <person name="Sun E."/>
            <person name="Svirskas R."/>
            <person name="Tector C."/>
            <person name="Turner R."/>
            <person name="Venter E."/>
            <person name="Wang A.H."/>
            <person name="Wang X."/>
            <person name="Wang Z.-Y."/>
            <person name="Wassarman D.A."/>
            <person name="Weinstock G.M."/>
            <person name="Weissenbach J."/>
            <person name="Williams S.M."/>
            <person name="Woodage T."/>
            <person name="Worley K.C."/>
            <person name="Wu D."/>
            <person name="Yang S."/>
            <person name="Yao Q.A."/>
            <person name="Ye J."/>
            <person name="Yeh R.-F."/>
            <person name="Zaveri J.S."/>
            <person name="Zhan M."/>
            <person name="Zhang G."/>
            <person name="Zhao Q."/>
            <person name="Zheng L."/>
            <person name="Zheng X.H."/>
            <person name="Zhong F.N."/>
            <person name="Zhong W."/>
            <person name="Zhou X."/>
            <person name="Zhu S.C."/>
            <person name="Zhu X."/>
            <person name="Smith H.O."/>
            <person name="Gibbs R.A."/>
            <person name="Myers E.W."/>
            <person name="Rubin G.M."/>
            <person name="Venter J.C."/>
        </authorList>
    </citation>
    <scope>NUCLEOTIDE SEQUENCE [LARGE SCALE GENOMIC DNA]</scope>
    <source>
        <strain>Berkeley</strain>
    </source>
</reference>
<reference key="3">
    <citation type="journal article" date="2002" name="Genome Biol.">
        <title>Annotation of the Drosophila melanogaster euchromatic genome: a systematic review.</title>
        <authorList>
            <person name="Misra S."/>
            <person name="Crosby M.A."/>
            <person name="Mungall C.J."/>
            <person name="Matthews B.B."/>
            <person name="Campbell K.S."/>
            <person name="Hradecky P."/>
            <person name="Huang Y."/>
            <person name="Kaminker J.S."/>
            <person name="Millburn G.H."/>
            <person name="Prochnik S.E."/>
            <person name="Smith C.D."/>
            <person name="Tupy J.L."/>
            <person name="Whitfield E.J."/>
            <person name="Bayraktaroglu L."/>
            <person name="Berman B.P."/>
            <person name="Bettencourt B.R."/>
            <person name="Celniker S.E."/>
            <person name="de Grey A.D.N.J."/>
            <person name="Drysdale R.A."/>
            <person name="Harris N.L."/>
            <person name="Richter J."/>
            <person name="Russo S."/>
            <person name="Schroeder A.J."/>
            <person name="Shu S.Q."/>
            <person name="Stapleton M."/>
            <person name="Yamada C."/>
            <person name="Ashburner M."/>
            <person name="Gelbart W.M."/>
            <person name="Rubin G.M."/>
            <person name="Lewis S.E."/>
        </authorList>
    </citation>
    <scope>GENOME REANNOTATION</scope>
    <source>
        <strain>Berkeley</strain>
    </source>
</reference>
<reference key="4">
    <citation type="journal article" date="2002" name="Genome Biol.">
        <title>A Drosophila full-length cDNA resource.</title>
        <authorList>
            <person name="Stapleton M."/>
            <person name="Carlson J.W."/>
            <person name="Brokstein P."/>
            <person name="Yu C."/>
            <person name="Champe M."/>
            <person name="George R.A."/>
            <person name="Guarin H."/>
            <person name="Kronmiller B."/>
            <person name="Pacleb J.M."/>
            <person name="Park S."/>
            <person name="Wan K.H."/>
            <person name="Rubin G.M."/>
            <person name="Celniker S.E."/>
        </authorList>
    </citation>
    <scope>NUCLEOTIDE SEQUENCE [LARGE SCALE MRNA]</scope>
    <source>
        <strain>Berkeley</strain>
        <tissue>Embryo</tissue>
    </source>
</reference>
<reference key="5">
    <citation type="journal article" date="1992" name="Genes Dev.">
        <title>The Drosophila pourquoi-pas?/wings-down zinc finger protein: oocyte nucleus localization and embryonic requirement.</title>
        <authorList>
            <person name="Segalat L."/>
            <person name="Perichon R."/>
            <person name="Bouly J.-P."/>
            <person name="Lepesant J.-A."/>
        </authorList>
    </citation>
    <scope>SUBCELLULAR LOCATION</scope>
    <scope>TISSUE SPECIFICITY</scope>
    <scope>DEVELOPMENTAL STAGE</scope>
</reference>
<comment type="function">
    <text evidence="4">May belong to a complex set of multifingered proteins which play an important role in gene activation or regulation at early embryonic stages through a maximal accumulation of their transcripts (or protein product) in the mature oocyte.</text>
</comment>
<comment type="subcellular location">
    <subcellularLocation>
        <location evidence="3">Nucleus</location>
    </subcellularLocation>
</comment>
<comment type="tissue specificity">
    <text evidence="3">Distribution varies between nurse cells and the oocyte during oogenesis. Weakly expressed in follicle and border cells.</text>
</comment>
<comment type="developmental stage">
    <text evidence="3 4">Expressed both maternally and zygotically. Expressed from stage 1 of oogenesis. Expressed at a low level in the embryo from the tenth nuclear division to the end of cellularization in all cell nuclei except those of pole cells. Also weakly expressed in the embryo after germ-band retraction, and in larvae (at protein level).</text>
</comment>
<evidence type="ECO:0000255" key="1">
    <source>
        <dbReference type="PROSITE-ProRule" id="PRU00042"/>
    </source>
</evidence>
<evidence type="ECO:0000256" key="2">
    <source>
        <dbReference type="SAM" id="MobiDB-lite"/>
    </source>
</evidence>
<evidence type="ECO:0000269" key="3">
    <source>
    </source>
</evidence>
<evidence type="ECO:0000269" key="4">
    <source>
    </source>
</evidence>
<evidence type="ECO:0000305" key="5"/>
<name>SRYC_DROME</name>